<proteinExistence type="evidence at transcript level"/>
<organism>
    <name type="scientific">Arabidopsis thaliana</name>
    <name type="common">Mouse-ear cress</name>
    <dbReference type="NCBI Taxonomy" id="3702"/>
    <lineage>
        <taxon>Eukaryota</taxon>
        <taxon>Viridiplantae</taxon>
        <taxon>Streptophyta</taxon>
        <taxon>Embryophyta</taxon>
        <taxon>Tracheophyta</taxon>
        <taxon>Spermatophyta</taxon>
        <taxon>Magnoliopsida</taxon>
        <taxon>eudicotyledons</taxon>
        <taxon>Gunneridae</taxon>
        <taxon>Pentapetalae</taxon>
        <taxon>rosids</taxon>
        <taxon>malvids</taxon>
        <taxon>Brassicales</taxon>
        <taxon>Brassicaceae</taxon>
        <taxon>Camelineae</taxon>
        <taxon>Arabidopsis</taxon>
    </lineage>
</organism>
<comment type="function">
    <text evidence="1">Potential calcium sensor.</text>
</comment>
<comment type="caution">
    <text evidence="4">Although assigned as a calmodulin family member by Ref.4, it only contains EF-hand domains.</text>
</comment>
<accession>Q8L3R2</accession>
<accession>Q9SVM1</accession>
<dbReference type="EMBL" id="AL049862">
    <property type="protein sequence ID" value="CAB42906.1"/>
    <property type="molecule type" value="Genomic_DNA"/>
</dbReference>
<dbReference type="EMBL" id="CP002686">
    <property type="protein sequence ID" value="AEE78708.1"/>
    <property type="molecule type" value="Genomic_DNA"/>
</dbReference>
<dbReference type="EMBL" id="AY099647">
    <property type="protein sequence ID" value="AAM20498.1"/>
    <property type="molecule type" value="mRNA"/>
</dbReference>
<dbReference type="EMBL" id="AY128835">
    <property type="protein sequence ID" value="AAM91235.1"/>
    <property type="molecule type" value="mRNA"/>
</dbReference>
<dbReference type="PIR" id="T08398">
    <property type="entry name" value="T08398"/>
</dbReference>
<dbReference type="RefSeq" id="NP_190646.1">
    <property type="nucleotide sequence ID" value="NM_114937.3"/>
</dbReference>
<dbReference type="SMR" id="Q8L3R2"/>
<dbReference type="BioGRID" id="9559">
    <property type="interactions" value="1"/>
</dbReference>
<dbReference type="FunCoup" id="Q8L3R2">
    <property type="interactions" value="202"/>
</dbReference>
<dbReference type="IntAct" id="Q8L3R2">
    <property type="interactions" value="1"/>
</dbReference>
<dbReference type="STRING" id="3702.Q8L3R2"/>
<dbReference type="iPTMnet" id="Q8L3R2"/>
<dbReference type="PaxDb" id="3702-AT3G50770.1"/>
<dbReference type="ProteomicsDB" id="241079"/>
<dbReference type="DNASU" id="824241"/>
<dbReference type="EnsemblPlants" id="AT3G50770.1">
    <property type="protein sequence ID" value="AT3G50770.1"/>
    <property type="gene ID" value="AT3G50770"/>
</dbReference>
<dbReference type="GeneID" id="824241"/>
<dbReference type="Gramene" id="AT3G50770.1">
    <property type="protein sequence ID" value="AT3G50770.1"/>
    <property type="gene ID" value="AT3G50770"/>
</dbReference>
<dbReference type="KEGG" id="ath:AT3G50770"/>
<dbReference type="Araport" id="AT3G50770"/>
<dbReference type="TAIR" id="AT3G50770">
    <property type="gene designation" value="CML41"/>
</dbReference>
<dbReference type="eggNOG" id="KOG0027">
    <property type="taxonomic scope" value="Eukaryota"/>
</dbReference>
<dbReference type="HOGENOM" id="CLU_061288_20_6_1"/>
<dbReference type="InParanoid" id="Q8L3R2"/>
<dbReference type="OMA" id="FEMYELE"/>
<dbReference type="PhylomeDB" id="Q8L3R2"/>
<dbReference type="PRO" id="PR:Q8L3R2"/>
<dbReference type="Proteomes" id="UP000006548">
    <property type="component" value="Chromosome 3"/>
</dbReference>
<dbReference type="ExpressionAtlas" id="Q8L3R2">
    <property type="expression patterns" value="baseline and differential"/>
</dbReference>
<dbReference type="GO" id="GO:0005509">
    <property type="term" value="F:calcium ion binding"/>
    <property type="evidence" value="ECO:0007669"/>
    <property type="project" value="InterPro"/>
</dbReference>
<dbReference type="CDD" id="cd00051">
    <property type="entry name" value="EFh"/>
    <property type="match status" value="2"/>
</dbReference>
<dbReference type="FunFam" id="1.10.238.10:FF:000003">
    <property type="entry name" value="Calmodulin A"/>
    <property type="match status" value="1"/>
</dbReference>
<dbReference type="Gene3D" id="1.10.238.10">
    <property type="entry name" value="EF-hand"/>
    <property type="match status" value="2"/>
</dbReference>
<dbReference type="InterPro" id="IPR050145">
    <property type="entry name" value="Centrin_CML-like"/>
</dbReference>
<dbReference type="InterPro" id="IPR011992">
    <property type="entry name" value="EF-hand-dom_pair"/>
</dbReference>
<dbReference type="InterPro" id="IPR018247">
    <property type="entry name" value="EF_Hand_1_Ca_BS"/>
</dbReference>
<dbReference type="InterPro" id="IPR002048">
    <property type="entry name" value="EF_hand_dom"/>
</dbReference>
<dbReference type="PANTHER" id="PTHR23050">
    <property type="entry name" value="CALCIUM BINDING PROTEIN"/>
    <property type="match status" value="1"/>
</dbReference>
<dbReference type="Pfam" id="PF13499">
    <property type="entry name" value="EF-hand_7"/>
    <property type="match status" value="1"/>
</dbReference>
<dbReference type="Pfam" id="PF13833">
    <property type="entry name" value="EF-hand_8"/>
    <property type="match status" value="1"/>
</dbReference>
<dbReference type="SMART" id="SM00054">
    <property type="entry name" value="EFh"/>
    <property type="match status" value="4"/>
</dbReference>
<dbReference type="SUPFAM" id="SSF47473">
    <property type="entry name" value="EF-hand"/>
    <property type="match status" value="1"/>
</dbReference>
<dbReference type="PROSITE" id="PS00018">
    <property type="entry name" value="EF_HAND_1"/>
    <property type="match status" value="3"/>
</dbReference>
<dbReference type="PROSITE" id="PS50222">
    <property type="entry name" value="EF_HAND_2"/>
    <property type="match status" value="3"/>
</dbReference>
<protein>
    <recommendedName>
        <fullName>Probable calcium-binding protein CML41</fullName>
    </recommendedName>
    <alternativeName>
        <fullName>Calmodulin-like protein 41</fullName>
    </alternativeName>
</protein>
<name>CML41_ARATH</name>
<sequence>MATQKEKPSSNSFKWFSTKTLKLNLSFQNRRRSPKSNSSSTLNSPRSNSDDNNNIKSHQASKEELRQVFSHFDSDGDGKISAFELRHYFGSVGEYISHEAAQEAINEVDTDADGSLGFEDFVGLMTRRDLYGDGEVDGDGELKTAFEMFEVEKGSGCITPKGLQKMLVKLGESRTYGECEAMIKFYDIDGNGILDFHEFRQMMTV</sequence>
<reference key="1">
    <citation type="journal article" date="2000" name="Nature">
        <title>Sequence and analysis of chromosome 3 of the plant Arabidopsis thaliana.</title>
        <authorList>
            <person name="Salanoubat M."/>
            <person name="Lemcke K."/>
            <person name="Rieger M."/>
            <person name="Ansorge W."/>
            <person name="Unseld M."/>
            <person name="Fartmann B."/>
            <person name="Valle G."/>
            <person name="Bloecker H."/>
            <person name="Perez-Alonso M."/>
            <person name="Obermaier B."/>
            <person name="Delseny M."/>
            <person name="Boutry M."/>
            <person name="Grivell L.A."/>
            <person name="Mache R."/>
            <person name="Puigdomenech P."/>
            <person name="De Simone V."/>
            <person name="Choisne N."/>
            <person name="Artiguenave F."/>
            <person name="Robert C."/>
            <person name="Brottier P."/>
            <person name="Wincker P."/>
            <person name="Cattolico L."/>
            <person name="Weissenbach J."/>
            <person name="Saurin W."/>
            <person name="Quetier F."/>
            <person name="Schaefer M."/>
            <person name="Mueller-Auer S."/>
            <person name="Gabel C."/>
            <person name="Fuchs M."/>
            <person name="Benes V."/>
            <person name="Wurmbach E."/>
            <person name="Drzonek H."/>
            <person name="Erfle H."/>
            <person name="Jordan N."/>
            <person name="Bangert S."/>
            <person name="Wiedelmann R."/>
            <person name="Kranz H."/>
            <person name="Voss H."/>
            <person name="Holland R."/>
            <person name="Brandt P."/>
            <person name="Nyakatura G."/>
            <person name="Vezzi A."/>
            <person name="D'Angelo M."/>
            <person name="Pallavicini A."/>
            <person name="Toppo S."/>
            <person name="Simionati B."/>
            <person name="Conrad A."/>
            <person name="Hornischer K."/>
            <person name="Kauer G."/>
            <person name="Loehnert T.-H."/>
            <person name="Nordsiek G."/>
            <person name="Reichelt J."/>
            <person name="Scharfe M."/>
            <person name="Schoen O."/>
            <person name="Bargues M."/>
            <person name="Terol J."/>
            <person name="Climent J."/>
            <person name="Navarro P."/>
            <person name="Collado C."/>
            <person name="Perez-Perez A."/>
            <person name="Ottenwaelder B."/>
            <person name="Duchemin D."/>
            <person name="Cooke R."/>
            <person name="Laudie M."/>
            <person name="Berger-Llauro C."/>
            <person name="Purnelle B."/>
            <person name="Masuy D."/>
            <person name="de Haan M."/>
            <person name="Maarse A.C."/>
            <person name="Alcaraz J.-P."/>
            <person name="Cottet A."/>
            <person name="Casacuberta E."/>
            <person name="Monfort A."/>
            <person name="Argiriou A."/>
            <person name="Flores M."/>
            <person name="Liguori R."/>
            <person name="Vitale D."/>
            <person name="Mannhaupt G."/>
            <person name="Haase D."/>
            <person name="Schoof H."/>
            <person name="Rudd S."/>
            <person name="Zaccaria P."/>
            <person name="Mewes H.-W."/>
            <person name="Mayer K.F.X."/>
            <person name="Kaul S."/>
            <person name="Town C.D."/>
            <person name="Koo H.L."/>
            <person name="Tallon L.J."/>
            <person name="Jenkins J."/>
            <person name="Rooney T."/>
            <person name="Rizzo M."/>
            <person name="Walts A."/>
            <person name="Utterback T."/>
            <person name="Fujii C.Y."/>
            <person name="Shea T.P."/>
            <person name="Creasy T.H."/>
            <person name="Haas B."/>
            <person name="Maiti R."/>
            <person name="Wu D."/>
            <person name="Peterson J."/>
            <person name="Van Aken S."/>
            <person name="Pai G."/>
            <person name="Militscher J."/>
            <person name="Sellers P."/>
            <person name="Gill J.E."/>
            <person name="Feldblyum T.V."/>
            <person name="Preuss D."/>
            <person name="Lin X."/>
            <person name="Nierman W.C."/>
            <person name="Salzberg S.L."/>
            <person name="White O."/>
            <person name="Venter J.C."/>
            <person name="Fraser C.M."/>
            <person name="Kaneko T."/>
            <person name="Nakamura Y."/>
            <person name="Sato S."/>
            <person name="Kato T."/>
            <person name="Asamizu E."/>
            <person name="Sasamoto S."/>
            <person name="Kimura T."/>
            <person name="Idesawa K."/>
            <person name="Kawashima K."/>
            <person name="Kishida Y."/>
            <person name="Kiyokawa C."/>
            <person name="Kohara M."/>
            <person name="Matsumoto M."/>
            <person name="Matsuno A."/>
            <person name="Muraki A."/>
            <person name="Nakayama S."/>
            <person name="Nakazaki N."/>
            <person name="Shinpo S."/>
            <person name="Takeuchi C."/>
            <person name="Wada T."/>
            <person name="Watanabe A."/>
            <person name="Yamada M."/>
            <person name="Yasuda M."/>
            <person name="Tabata S."/>
        </authorList>
    </citation>
    <scope>NUCLEOTIDE SEQUENCE [LARGE SCALE GENOMIC DNA]</scope>
    <source>
        <strain>cv. Columbia</strain>
    </source>
</reference>
<reference key="2">
    <citation type="journal article" date="2017" name="Plant J.">
        <title>Araport11: a complete reannotation of the Arabidopsis thaliana reference genome.</title>
        <authorList>
            <person name="Cheng C.Y."/>
            <person name="Krishnakumar V."/>
            <person name="Chan A.P."/>
            <person name="Thibaud-Nissen F."/>
            <person name="Schobel S."/>
            <person name="Town C.D."/>
        </authorList>
    </citation>
    <scope>GENOME REANNOTATION</scope>
    <source>
        <strain>cv. Columbia</strain>
    </source>
</reference>
<reference key="3">
    <citation type="journal article" date="2003" name="Science">
        <title>Empirical analysis of transcriptional activity in the Arabidopsis genome.</title>
        <authorList>
            <person name="Yamada K."/>
            <person name="Lim J."/>
            <person name="Dale J.M."/>
            <person name="Chen H."/>
            <person name="Shinn P."/>
            <person name="Palm C.J."/>
            <person name="Southwick A.M."/>
            <person name="Wu H.C."/>
            <person name="Kim C.J."/>
            <person name="Nguyen M."/>
            <person name="Pham P.K."/>
            <person name="Cheuk R.F."/>
            <person name="Karlin-Newmann G."/>
            <person name="Liu S.X."/>
            <person name="Lam B."/>
            <person name="Sakano H."/>
            <person name="Wu T."/>
            <person name="Yu G."/>
            <person name="Miranda M."/>
            <person name="Quach H.L."/>
            <person name="Tripp M."/>
            <person name="Chang C.H."/>
            <person name="Lee J.M."/>
            <person name="Toriumi M.J."/>
            <person name="Chan M.M."/>
            <person name="Tang C.C."/>
            <person name="Onodera C.S."/>
            <person name="Deng J.M."/>
            <person name="Akiyama K."/>
            <person name="Ansari Y."/>
            <person name="Arakawa T."/>
            <person name="Banh J."/>
            <person name="Banno F."/>
            <person name="Bowser L."/>
            <person name="Brooks S.Y."/>
            <person name="Carninci P."/>
            <person name="Chao Q."/>
            <person name="Choy N."/>
            <person name="Enju A."/>
            <person name="Goldsmith A.D."/>
            <person name="Gurjal M."/>
            <person name="Hansen N.F."/>
            <person name="Hayashizaki Y."/>
            <person name="Johnson-Hopson C."/>
            <person name="Hsuan V.W."/>
            <person name="Iida K."/>
            <person name="Karnes M."/>
            <person name="Khan S."/>
            <person name="Koesema E."/>
            <person name="Ishida J."/>
            <person name="Jiang P.X."/>
            <person name="Jones T."/>
            <person name="Kawai J."/>
            <person name="Kamiya A."/>
            <person name="Meyers C."/>
            <person name="Nakajima M."/>
            <person name="Narusaka M."/>
            <person name="Seki M."/>
            <person name="Sakurai T."/>
            <person name="Satou M."/>
            <person name="Tamse R."/>
            <person name="Vaysberg M."/>
            <person name="Wallender E.K."/>
            <person name="Wong C."/>
            <person name="Yamamura Y."/>
            <person name="Yuan S."/>
            <person name="Shinozaki K."/>
            <person name="Davis R.W."/>
            <person name="Theologis A."/>
            <person name="Ecker J.R."/>
        </authorList>
    </citation>
    <scope>NUCLEOTIDE SEQUENCE [LARGE SCALE MRNA]</scope>
    <source>
        <strain>cv. Columbia</strain>
    </source>
</reference>
<reference key="4">
    <citation type="journal article" date="2003" name="New Phytol.">
        <title>Calmodulins and related potential calcium sensors of Arabidopsis.</title>
        <authorList>
            <person name="McCormack E."/>
            <person name="Braam J."/>
        </authorList>
    </citation>
    <scope>GENE FAMILY</scope>
    <scope>NOMENCLATURE</scope>
</reference>
<feature type="chain" id="PRO_0000073655" description="Probable calcium-binding protein CML41">
    <location>
        <begin position="1"/>
        <end position="205"/>
    </location>
</feature>
<feature type="domain" description="EF-hand 1" evidence="2">
    <location>
        <begin position="60"/>
        <end position="95"/>
    </location>
</feature>
<feature type="domain" description="EF-hand 2" evidence="2">
    <location>
        <begin position="96"/>
        <end position="131"/>
    </location>
</feature>
<feature type="domain" description="EF-hand 3" evidence="4">
    <location>
        <begin position="137"/>
        <end position="173"/>
    </location>
</feature>
<feature type="domain" description="EF-hand 4" evidence="2">
    <location>
        <begin position="174"/>
        <end position="205"/>
    </location>
</feature>
<feature type="region of interest" description="Disordered" evidence="3">
    <location>
        <begin position="26"/>
        <end position="55"/>
    </location>
</feature>
<feature type="compositionally biased region" description="Low complexity" evidence="3">
    <location>
        <begin position="35"/>
        <end position="54"/>
    </location>
</feature>
<feature type="binding site" evidence="2">
    <location>
        <position position="73"/>
    </location>
    <ligand>
        <name>Ca(2+)</name>
        <dbReference type="ChEBI" id="CHEBI:29108"/>
        <label>1</label>
    </ligand>
</feature>
<feature type="binding site" evidence="2">
    <location>
        <position position="75"/>
    </location>
    <ligand>
        <name>Ca(2+)</name>
        <dbReference type="ChEBI" id="CHEBI:29108"/>
        <label>1</label>
    </ligand>
</feature>
<feature type="binding site" evidence="2">
    <location>
        <position position="77"/>
    </location>
    <ligand>
        <name>Ca(2+)</name>
        <dbReference type="ChEBI" id="CHEBI:29108"/>
        <label>1</label>
    </ligand>
</feature>
<feature type="binding site" evidence="2">
    <location>
        <position position="79"/>
    </location>
    <ligand>
        <name>Ca(2+)</name>
        <dbReference type="ChEBI" id="CHEBI:29108"/>
        <label>1</label>
    </ligand>
</feature>
<feature type="binding site" evidence="2">
    <location>
        <position position="84"/>
    </location>
    <ligand>
        <name>Ca(2+)</name>
        <dbReference type="ChEBI" id="CHEBI:29108"/>
        <label>1</label>
    </ligand>
</feature>
<feature type="binding site" evidence="2">
    <location>
        <position position="109"/>
    </location>
    <ligand>
        <name>Ca(2+)</name>
        <dbReference type="ChEBI" id="CHEBI:29108"/>
        <label>2</label>
    </ligand>
</feature>
<feature type="binding site" evidence="2">
    <location>
        <position position="111"/>
    </location>
    <ligand>
        <name>Ca(2+)</name>
        <dbReference type="ChEBI" id="CHEBI:29108"/>
        <label>2</label>
    </ligand>
</feature>
<feature type="binding site" evidence="2">
    <location>
        <position position="113"/>
    </location>
    <ligand>
        <name>Ca(2+)</name>
        <dbReference type="ChEBI" id="CHEBI:29108"/>
        <label>2</label>
    </ligand>
</feature>
<feature type="binding site" evidence="2">
    <location>
        <position position="115"/>
    </location>
    <ligand>
        <name>Ca(2+)</name>
        <dbReference type="ChEBI" id="CHEBI:29108"/>
        <label>2</label>
    </ligand>
</feature>
<feature type="binding site" evidence="2">
    <location>
        <position position="120"/>
    </location>
    <ligand>
        <name>Ca(2+)</name>
        <dbReference type="ChEBI" id="CHEBI:29108"/>
        <label>2</label>
    </ligand>
</feature>
<feature type="binding site" evidence="2">
    <location>
        <position position="187"/>
    </location>
    <ligand>
        <name>Ca(2+)</name>
        <dbReference type="ChEBI" id="CHEBI:29108"/>
        <label>3</label>
    </ligand>
</feature>
<feature type="binding site" evidence="2">
    <location>
        <position position="189"/>
    </location>
    <ligand>
        <name>Ca(2+)</name>
        <dbReference type="ChEBI" id="CHEBI:29108"/>
        <label>3</label>
    </ligand>
</feature>
<feature type="binding site" evidence="2">
    <location>
        <position position="191"/>
    </location>
    <ligand>
        <name>Ca(2+)</name>
        <dbReference type="ChEBI" id="CHEBI:29108"/>
        <label>3</label>
    </ligand>
</feature>
<feature type="binding site" evidence="2">
    <location>
        <position position="198"/>
    </location>
    <ligand>
        <name>Ca(2+)</name>
        <dbReference type="ChEBI" id="CHEBI:29108"/>
        <label>3</label>
    </ligand>
</feature>
<feature type="sequence conflict" description="In Ref. 3; AAM20498/AAM91235." evidence="4" ref="3">
    <original>H</original>
    <variation>R</variation>
    <location>
        <position position="58"/>
    </location>
</feature>
<evidence type="ECO:0000250" key="1"/>
<evidence type="ECO:0000255" key="2">
    <source>
        <dbReference type="PROSITE-ProRule" id="PRU00448"/>
    </source>
</evidence>
<evidence type="ECO:0000256" key="3">
    <source>
        <dbReference type="SAM" id="MobiDB-lite"/>
    </source>
</evidence>
<evidence type="ECO:0000305" key="4"/>
<keyword id="KW-0106">Calcium</keyword>
<keyword id="KW-0479">Metal-binding</keyword>
<keyword id="KW-1185">Reference proteome</keyword>
<keyword id="KW-0677">Repeat</keyword>
<gene>
    <name type="primary">CML41</name>
    <name type="ordered locus">At3g50770</name>
    <name type="ORF">F18B3.50</name>
</gene>